<proteinExistence type="inferred from homology"/>
<keyword id="KW-0150">Chloroplast</keyword>
<keyword id="KW-0472">Membrane</keyword>
<keyword id="KW-0602">Photosynthesis</keyword>
<keyword id="KW-0604">Photosystem II</keyword>
<keyword id="KW-0934">Plastid</keyword>
<keyword id="KW-0674">Reaction center</keyword>
<keyword id="KW-1185">Reference proteome</keyword>
<keyword id="KW-0793">Thylakoid</keyword>
<keyword id="KW-0812">Transmembrane</keyword>
<keyword id="KW-1133">Transmembrane helix</keyword>
<protein>
    <recommendedName>
        <fullName evidence="1">Photosystem II reaction center protein I</fullName>
        <shortName evidence="1">PSII-I</shortName>
    </recommendedName>
    <alternativeName>
        <fullName evidence="1">PSII 4.8 kDa protein</fullName>
    </alternativeName>
</protein>
<geneLocation type="chloroplast"/>
<gene>
    <name evidence="1" type="primary">psbI</name>
</gene>
<comment type="function">
    <text evidence="1">One of the components of the core complex of photosystem II (PSII), required for its stability and/or assembly. PSII is a light-driven water:plastoquinone oxidoreductase that uses light energy to abstract electrons from H(2)O, generating O(2) and a proton gradient subsequently used for ATP formation. It consists of a core antenna complex that captures photons, and an electron transfer chain that converts photonic excitation into a charge separation.</text>
</comment>
<comment type="subunit">
    <text evidence="1">PSII is composed of 1 copy each of membrane proteins PsbA, PsbB, PsbC, PsbD, PsbE, PsbF, PsbH, PsbI, PsbJ, PsbK, PsbL, PsbM, PsbT, PsbX, PsbY, PsbZ, Psb30/Ycf12, at least 3 peripheral proteins of the oxygen-evolving complex and a large number of cofactors. It forms dimeric complexes.</text>
</comment>
<comment type="subcellular location">
    <subcellularLocation>
        <location evidence="1">Plastid</location>
        <location evidence="1">Chloroplast thylakoid membrane</location>
        <topology evidence="1">Single-pass membrane protein</topology>
    </subcellularLocation>
</comment>
<comment type="similarity">
    <text evidence="1">Belongs to the PsbI family.</text>
</comment>
<reference key="1">
    <citation type="journal article" date="2007" name="Plant Biotechnol. J.">
        <title>The complete nucleotide sequence of the coffee (Coffea arabica L.) chloroplast genome: organization and implications for biotechnology and phylogenetic relationships amongst angiosperms.</title>
        <authorList>
            <person name="Samson N."/>
            <person name="Bausher M.G."/>
            <person name="Lee S.-B."/>
            <person name="Jansen R.K."/>
            <person name="Daniell H."/>
        </authorList>
    </citation>
    <scope>NUCLEOTIDE SEQUENCE [LARGE SCALE GENOMIC DNA]</scope>
</reference>
<sequence length="36" mass="4168">MLTLKLFVYTVVIFFVSLFIFGFLSNDPGRNPGREE</sequence>
<dbReference type="EMBL" id="EF044213">
    <property type="protein sequence ID" value="ABJ89663.1"/>
    <property type="molecule type" value="Genomic_DNA"/>
</dbReference>
<dbReference type="RefSeq" id="YP_817466.1">
    <property type="nucleotide sequence ID" value="NC_008535.1"/>
</dbReference>
<dbReference type="SMR" id="A0A319"/>
<dbReference type="GeneID" id="4421807"/>
<dbReference type="OrthoDB" id="564007at2759"/>
<dbReference type="Proteomes" id="UP000515148">
    <property type="component" value="Chloroplast Pltd"/>
</dbReference>
<dbReference type="GO" id="GO:0009535">
    <property type="term" value="C:chloroplast thylakoid membrane"/>
    <property type="evidence" value="ECO:0007669"/>
    <property type="project" value="UniProtKB-SubCell"/>
</dbReference>
<dbReference type="GO" id="GO:0009539">
    <property type="term" value="C:photosystem II reaction center"/>
    <property type="evidence" value="ECO:0007669"/>
    <property type="project" value="InterPro"/>
</dbReference>
<dbReference type="GO" id="GO:0015979">
    <property type="term" value="P:photosynthesis"/>
    <property type="evidence" value="ECO:0007669"/>
    <property type="project" value="UniProtKB-UniRule"/>
</dbReference>
<dbReference type="HAMAP" id="MF_01316">
    <property type="entry name" value="PSII_PsbI"/>
    <property type="match status" value="1"/>
</dbReference>
<dbReference type="InterPro" id="IPR003686">
    <property type="entry name" value="PSII_PsbI"/>
</dbReference>
<dbReference type="InterPro" id="IPR037271">
    <property type="entry name" value="PSII_PsbI_sf"/>
</dbReference>
<dbReference type="NCBIfam" id="NF002735">
    <property type="entry name" value="PRK02655.1"/>
    <property type="match status" value="1"/>
</dbReference>
<dbReference type="PANTHER" id="PTHR35772">
    <property type="entry name" value="PHOTOSYSTEM II REACTION CENTER PROTEIN I"/>
    <property type="match status" value="1"/>
</dbReference>
<dbReference type="PANTHER" id="PTHR35772:SF1">
    <property type="entry name" value="PHOTOSYSTEM II REACTION CENTER PROTEIN I"/>
    <property type="match status" value="1"/>
</dbReference>
<dbReference type="Pfam" id="PF02532">
    <property type="entry name" value="PsbI"/>
    <property type="match status" value="1"/>
</dbReference>
<dbReference type="SUPFAM" id="SSF161041">
    <property type="entry name" value="Photosystem II reaction center protein I, PsbI"/>
    <property type="match status" value="1"/>
</dbReference>
<accession>A0A319</accession>
<feature type="chain" id="PRO_0000275787" description="Photosystem II reaction center protein I">
    <location>
        <begin position="1"/>
        <end position="36"/>
    </location>
</feature>
<feature type="transmembrane region" description="Helical" evidence="1">
    <location>
        <begin position="4"/>
        <end position="24"/>
    </location>
</feature>
<name>PSBI_COFAR</name>
<organism>
    <name type="scientific">Coffea arabica</name>
    <name type="common">Arabian coffee</name>
    <dbReference type="NCBI Taxonomy" id="13443"/>
    <lineage>
        <taxon>Eukaryota</taxon>
        <taxon>Viridiplantae</taxon>
        <taxon>Streptophyta</taxon>
        <taxon>Embryophyta</taxon>
        <taxon>Tracheophyta</taxon>
        <taxon>Spermatophyta</taxon>
        <taxon>Magnoliopsida</taxon>
        <taxon>eudicotyledons</taxon>
        <taxon>Gunneridae</taxon>
        <taxon>Pentapetalae</taxon>
        <taxon>asterids</taxon>
        <taxon>lamiids</taxon>
        <taxon>Gentianales</taxon>
        <taxon>Rubiaceae</taxon>
        <taxon>Ixoroideae</taxon>
        <taxon>Gardenieae complex</taxon>
        <taxon>Bertiereae - Coffeeae clade</taxon>
        <taxon>Coffeeae</taxon>
        <taxon>Coffea</taxon>
    </lineage>
</organism>
<evidence type="ECO:0000255" key="1">
    <source>
        <dbReference type="HAMAP-Rule" id="MF_01316"/>
    </source>
</evidence>